<gene>
    <name evidence="7" type="primary">alpha-Man-IIa</name>
    <name evidence="5" type="synonym">GmII</name>
    <name evidence="7" type="ORF">CG18802</name>
</gene>
<dbReference type="EC" id="3.2.1.114" evidence="4"/>
<dbReference type="EMBL" id="X77652">
    <property type="protein sequence ID" value="CAA54732.1"/>
    <property type="molecule type" value="mRNA"/>
</dbReference>
<dbReference type="EMBL" id="AJ132715">
    <property type="protein sequence ID" value="CAA10755.1"/>
    <property type="molecule type" value="Genomic_DNA"/>
</dbReference>
<dbReference type="EMBL" id="AE014297">
    <property type="protein sequence ID" value="AAF54375.1"/>
    <property type="molecule type" value="Genomic_DNA"/>
</dbReference>
<dbReference type="EMBL" id="AY119464">
    <property type="protein sequence ID" value="AAM50118.1"/>
    <property type="molecule type" value="mRNA"/>
</dbReference>
<dbReference type="PIR" id="JC4037">
    <property type="entry name" value="JC4037"/>
</dbReference>
<dbReference type="RefSeq" id="NP_524291.2">
    <property type="nucleotide sequence ID" value="NM_079567.3"/>
</dbReference>
<dbReference type="PDB" id="1HTY">
    <property type="method" value="X-ray"/>
    <property type="resolution" value="1.40 A"/>
    <property type="chains" value="A=94-1108"/>
</dbReference>
<dbReference type="PDB" id="1HWW">
    <property type="method" value="X-ray"/>
    <property type="resolution" value="1.87 A"/>
    <property type="chains" value="A=94-1108"/>
</dbReference>
<dbReference type="PDB" id="1HXK">
    <property type="method" value="X-ray"/>
    <property type="resolution" value="1.50 A"/>
    <property type="chains" value="A=94-1108"/>
</dbReference>
<dbReference type="PDB" id="1PS3">
    <property type="method" value="X-ray"/>
    <property type="resolution" value="1.80 A"/>
    <property type="chains" value="A=64-1108"/>
</dbReference>
<dbReference type="PDB" id="1QWN">
    <property type="method" value="X-ray"/>
    <property type="resolution" value="1.20 A"/>
    <property type="chains" value="A=76-1108"/>
</dbReference>
<dbReference type="PDB" id="1QWU">
    <property type="method" value="X-ray"/>
    <property type="resolution" value="2.03 A"/>
    <property type="chains" value="A=76-1108"/>
</dbReference>
<dbReference type="PDB" id="1QX1">
    <property type="method" value="X-ray"/>
    <property type="resolution" value="1.30 A"/>
    <property type="chains" value="A=76-1108"/>
</dbReference>
<dbReference type="PDB" id="1R33">
    <property type="method" value="X-ray"/>
    <property type="resolution" value="1.80 A"/>
    <property type="chains" value="A=76-1108"/>
</dbReference>
<dbReference type="PDB" id="1R34">
    <property type="method" value="X-ray"/>
    <property type="resolution" value="1.95 A"/>
    <property type="chains" value="A=76-1108"/>
</dbReference>
<dbReference type="PDB" id="1TQS">
    <property type="method" value="X-ray"/>
    <property type="resolution" value="1.30 A"/>
    <property type="chains" value="A=76-1108"/>
</dbReference>
<dbReference type="PDB" id="1TQT">
    <property type="method" value="X-ray"/>
    <property type="resolution" value="1.90 A"/>
    <property type="chains" value="A=76-1108"/>
</dbReference>
<dbReference type="PDB" id="1TQU">
    <property type="method" value="X-ray"/>
    <property type="resolution" value="2.03 A"/>
    <property type="chains" value="A=76-1108"/>
</dbReference>
<dbReference type="PDB" id="1TQV">
    <property type="method" value="X-ray"/>
    <property type="resolution" value="2.03 A"/>
    <property type="chains" value="A=76-1108"/>
</dbReference>
<dbReference type="PDB" id="1TQW">
    <property type="method" value="X-ray"/>
    <property type="resolution" value="1.20 A"/>
    <property type="chains" value="A=76-1108"/>
</dbReference>
<dbReference type="PDB" id="2ALW">
    <property type="method" value="X-ray"/>
    <property type="resolution" value="1.86 A"/>
    <property type="chains" value="A=76-1108"/>
</dbReference>
<dbReference type="PDB" id="2F18">
    <property type="method" value="X-ray"/>
    <property type="resolution" value="1.30 A"/>
    <property type="chains" value="A=76-1108"/>
</dbReference>
<dbReference type="PDB" id="2F1A">
    <property type="method" value="X-ray"/>
    <property type="resolution" value="1.45 A"/>
    <property type="chains" value="A=76-1108"/>
</dbReference>
<dbReference type="PDB" id="2F1B">
    <property type="method" value="X-ray"/>
    <property type="resolution" value="1.45 A"/>
    <property type="chains" value="A=76-1108"/>
</dbReference>
<dbReference type="PDB" id="2F7O">
    <property type="method" value="X-ray"/>
    <property type="resolution" value="1.43 A"/>
    <property type="chains" value="A=76-1108"/>
</dbReference>
<dbReference type="PDB" id="2F7P">
    <property type="method" value="X-ray"/>
    <property type="resolution" value="1.28 A"/>
    <property type="chains" value="A=76-1108"/>
</dbReference>
<dbReference type="PDB" id="2F7Q">
    <property type="method" value="X-ray"/>
    <property type="resolution" value="1.85 A"/>
    <property type="chains" value="A=76-1108"/>
</dbReference>
<dbReference type="PDB" id="2F7R">
    <property type="method" value="X-ray"/>
    <property type="resolution" value="1.35 A"/>
    <property type="chains" value="A=76-1108"/>
</dbReference>
<dbReference type="PDB" id="2FYV">
    <property type="method" value="X-ray"/>
    <property type="resolution" value="1.90 A"/>
    <property type="chains" value="A=76-1108"/>
</dbReference>
<dbReference type="PDB" id="2OW6">
    <property type="method" value="X-ray"/>
    <property type="resolution" value="1.19 A"/>
    <property type="chains" value="A=76-1108"/>
</dbReference>
<dbReference type="PDB" id="2OW7">
    <property type="method" value="X-ray"/>
    <property type="resolution" value="1.77 A"/>
    <property type="chains" value="A=76-1108"/>
</dbReference>
<dbReference type="PDB" id="3BLB">
    <property type="method" value="X-ray"/>
    <property type="resolution" value="1.30 A"/>
    <property type="chains" value="A=76-1108"/>
</dbReference>
<dbReference type="PDB" id="3BUB">
    <property type="method" value="X-ray"/>
    <property type="resolution" value="1.38 A"/>
    <property type="chains" value="A=76-1108"/>
</dbReference>
<dbReference type="PDB" id="3BUD">
    <property type="method" value="X-ray"/>
    <property type="resolution" value="1.85 A"/>
    <property type="chains" value="A=76-1108"/>
</dbReference>
<dbReference type="PDB" id="3BUI">
    <property type="method" value="X-ray"/>
    <property type="resolution" value="1.25 A"/>
    <property type="chains" value="A=76-1108"/>
</dbReference>
<dbReference type="PDB" id="3BUP">
    <property type="method" value="X-ray"/>
    <property type="resolution" value="2.03 A"/>
    <property type="chains" value="A=76-1108"/>
</dbReference>
<dbReference type="PDB" id="3BUQ">
    <property type="method" value="X-ray"/>
    <property type="resolution" value="2.01 A"/>
    <property type="chains" value="A=76-1108"/>
</dbReference>
<dbReference type="PDB" id="3BVT">
    <property type="method" value="X-ray"/>
    <property type="resolution" value="1.30 A"/>
    <property type="chains" value="A=76-1108"/>
</dbReference>
<dbReference type="PDB" id="3BVU">
    <property type="method" value="X-ray"/>
    <property type="resolution" value="1.12 A"/>
    <property type="chains" value="A=76-1108"/>
</dbReference>
<dbReference type="PDB" id="3BVV">
    <property type="method" value="X-ray"/>
    <property type="resolution" value="1.30 A"/>
    <property type="chains" value="A=76-1108"/>
</dbReference>
<dbReference type="PDB" id="3BVW">
    <property type="method" value="X-ray"/>
    <property type="resolution" value="1.20 A"/>
    <property type="chains" value="A=76-1108"/>
</dbReference>
<dbReference type="PDB" id="3BVX">
    <property type="method" value="X-ray"/>
    <property type="resolution" value="1.10 A"/>
    <property type="chains" value="A=76-1108"/>
</dbReference>
<dbReference type="PDB" id="3CV5">
    <property type="method" value="X-ray"/>
    <property type="resolution" value="1.60 A"/>
    <property type="chains" value="A=76-1108"/>
</dbReference>
<dbReference type="PDB" id="3CZN">
    <property type="method" value="X-ray"/>
    <property type="resolution" value="1.40 A"/>
    <property type="chains" value="A=76-1108"/>
</dbReference>
<dbReference type="PDB" id="3CZS">
    <property type="method" value="X-ray"/>
    <property type="resolution" value="1.30 A"/>
    <property type="chains" value="A=76-1108"/>
</dbReference>
<dbReference type="PDB" id="3D4Y">
    <property type="method" value="X-ray"/>
    <property type="resolution" value="1.52 A"/>
    <property type="chains" value="A=76-1108"/>
</dbReference>
<dbReference type="PDB" id="3D4Z">
    <property type="method" value="X-ray"/>
    <property type="resolution" value="1.39 A"/>
    <property type="chains" value="A=76-1108"/>
</dbReference>
<dbReference type="PDB" id="3D50">
    <property type="method" value="X-ray"/>
    <property type="resolution" value="1.79 A"/>
    <property type="chains" value="A=76-1108"/>
</dbReference>
<dbReference type="PDB" id="3D51">
    <property type="method" value="X-ray"/>
    <property type="resolution" value="1.43 A"/>
    <property type="chains" value="A=76-1108"/>
</dbReference>
<dbReference type="PDB" id="3D52">
    <property type="method" value="X-ray"/>
    <property type="resolution" value="1.60 A"/>
    <property type="chains" value="A=76-1108"/>
</dbReference>
<dbReference type="PDB" id="3DDF">
    <property type="method" value="X-ray"/>
    <property type="resolution" value="1.20 A"/>
    <property type="chains" value="A=76-1108"/>
</dbReference>
<dbReference type="PDB" id="3DDG">
    <property type="method" value="X-ray"/>
    <property type="resolution" value="1.74 A"/>
    <property type="chains" value="A=76-1108"/>
</dbReference>
<dbReference type="PDB" id="3DX0">
    <property type="method" value="X-ray"/>
    <property type="resolution" value="1.70 A"/>
    <property type="chains" value="A=76-1108"/>
</dbReference>
<dbReference type="PDB" id="3DX1">
    <property type="method" value="X-ray"/>
    <property type="resolution" value="1.21 A"/>
    <property type="chains" value="A=76-1108"/>
</dbReference>
<dbReference type="PDB" id="3DX2">
    <property type="method" value="X-ray"/>
    <property type="resolution" value="1.40 A"/>
    <property type="chains" value="A=76-1108"/>
</dbReference>
<dbReference type="PDB" id="3DX3">
    <property type="method" value="X-ray"/>
    <property type="resolution" value="1.42 A"/>
    <property type="chains" value="A=76-1108"/>
</dbReference>
<dbReference type="PDB" id="3DX4">
    <property type="method" value="X-ray"/>
    <property type="resolution" value="1.38 A"/>
    <property type="chains" value="A=76-1108"/>
</dbReference>
<dbReference type="PDB" id="3EJP">
    <property type="method" value="X-ray"/>
    <property type="resolution" value="1.32 A"/>
    <property type="chains" value="A=76-1108"/>
</dbReference>
<dbReference type="PDB" id="3EJQ">
    <property type="method" value="X-ray"/>
    <property type="resolution" value="1.45 A"/>
    <property type="chains" value="A=76-1108"/>
</dbReference>
<dbReference type="PDB" id="3EJR">
    <property type="method" value="X-ray"/>
    <property type="resolution" value="1.27 A"/>
    <property type="chains" value="A=76-1108"/>
</dbReference>
<dbReference type="PDB" id="3EJS">
    <property type="method" value="X-ray"/>
    <property type="resolution" value="1.35 A"/>
    <property type="chains" value="A=76-1108"/>
</dbReference>
<dbReference type="PDB" id="3EJT">
    <property type="method" value="X-ray"/>
    <property type="resolution" value="1.35 A"/>
    <property type="chains" value="A=76-1108"/>
</dbReference>
<dbReference type="PDB" id="3EJU">
    <property type="method" value="X-ray"/>
    <property type="resolution" value="1.32 A"/>
    <property type="chains" value="A=76-1108"/>
</dbReference>
<dbReference type="PDB" id="6RPC">
    <property type="method" value="X-ray"/>
    <property type="resolution" value="1.69 A"/>
    <property type="chains" value="A=76-1108"/>
</dbReference>
<dbReference type="PDB" id="6RQZ">
    <property type="method" value="X-ray"/>
    <property type="resolution" value="1.53 A"/>
    <property type="chains" value="A=76-1108"/>
</dbReference>
<dbReference type="PDB" id="6RRH">
    <property type="method" value="X-ray"/>
    <property type="resolution" value="2.07 A"/>
    <property type="chains" value="A=76-1108"/>
</dbReference>
<dbReference type="PDB" id="6RRJ">
    <property type="method" value="X-ray"/>
    <property type="resolution" value="1.95 A"/>
    <property type="chains" value="A=76-1108"/>
</dbReference>
<dbReference type="PDB" id="6RRN">
    <property type="method" value="X-ray"/>
    <property type="resolution" value="1.59 A"/>
    <property type="chains" value="A=76-1108"/>
</dbReference>
<dbReference type="PDB" id="6RRU">
    <property type="method" value="X-ray"/>
    <property type="resolution" value="1.90 A"/>
    <property type="chains" value="A=76-1108"/>
</dbReference>
<dbReference type="PDB" id="6RRW">
    <property type="method" value="X-ray"/>
    <property type="resolution" value="2.15 A"/>
    <property type="chains" value="A=76-1108"/>
</dbReference>
<dbReference type="PDB" id="6RRX">
    <property type="method" value="X-ray"/>
    <property type="resolution" value="1.84 A"/>
    <property type="chains" value="A=76-1108"/>
</dbReference>
<dbReference type="PDB" id="6RRY">
    <property type="method" value="X-ray"/>
    <property type="resolution" value="1.86 A"/>
    <property type="chains" value="A=76-1108"/>
</dbReference>
<dbReference type="PDB" id="6RS0">
    <property type="method" value="X-ray"/>
    <property type="resolution" value="1.80 A"/>
    <property type="chains" value="A=76-1108"/>
</dbReference>
<dbReference type="PDB" id="9FTQ">
    <property type="method" value="X-ray"/>
    <property type="resolution" value="2.47 A"/>
    <property type="chains" value="A=76-1108"/>
</dbReference>
<dbReference type="PDB" id="9FTR">
    <property type="method" value="X-ray"/>
    <property type="resolution" value="2.14 A"/>
    <property type="chains" value="A=76-1108"/>
</dbReference>
<dbReference type="PDBsum" id="1HTY"/>
<dbReference type="PDBsum" id="1HWW"/>
<dbReference type="PDBsum" id="1HXK"/>
<dbReference type="PDBsum" id="1PS3"/>
<dbReference type="PDBsum" id="1QWN"/>
<dbReference type="PDBsum" id="1QWU"/>
<dbReference type="PDBsum" id="1QX1"/>
<dbReference type="PDBsum" id="1R33"/>
<dbReference type="PDBsum" id="1R34"/>
<dbReference type="PDBsum" id="1TQS"/>
<dbReference type="PDBsum" id="1TQT"/>
<dbReference type="PDBsum" id="1TQU"/>
<dbReference type="PDBsum" id="1TQV"/>
<dbReference type="PDBsum" id="1TQW"/>
<dbReference type="PDBsum" id="2ALW"/>
<dbReference type="PDBsum" id="2F18"/>
<dbReference type="PDBsum" id="2F1A"/>
<dbReference type="PDBsum" id="2F1B"/>
<dbReference type="PDBsum" id="2F7O"/>
<dbReference type="PDBsum" id="2F7P"/>
<dbReference type="PDBsum" id="2F7Q"/>
<dbReference type="PDBsum" id="2F7R"/>
<dbReference type="PDBsum" id="2FYV"/>
<dbReference type="PDBsum" id="2OW6"/>
<dbReference type="PDBsum" id="2OW7"/>
<dbReference type="PDBsum" id="3BLB"/>
<dbReference type="PDBsum" id="3BUB"/>
<dbReference type="PDBsum" id="3BUD"/>
<dbReference type="PDBsum" id="3BUI"/>
<dbReference type="PDBsum" id="3BUP"/>
<dbReference type="PDBsum" id="3BUQ"/>
<dbReference type="PDBsum" id="3BVT"/>
<dbReference type="PDBsum" id="3BVU"/>
<dbReference type="PDBsum" id="3BVV"/>
<dbReference type="PDBsum" id="3BVW"/>
<dbReference type="PDBsum" id="3BVX"/>
<dbReference type="PDBsum" id="3CV5"/>
<dbReference type="PDBsum" id="3CZN"/>
<dbReference type="PDBsum" id="3CZS"/>
<dbReference type="PDBsum" id="3D4Y"/>
<dbReference type="PDBsum" id="3D4Z"/>
<dbReference type="PDBsum" id="3D50"/>
<dbReference type="PDBsum" id="3D51"/>
<dbReference type="PDBsum" id="3D52"/>
<dbReference type="PDBsum" id="3DDF"/>
<dbReference type="PDBsum" id="3DDG"/>
<dbReference type="PDBsum" id="3DX0"/>
<dbReference type="PDBsum" id="3DX1"/>
<dbReference type="PDBsum" id="3DX2"/>
<dbReference type="PDBsum" id="3DX3"/>
<dbReference type="PDBsum" id="3DX4"/>
<dbReference type="PDBsum" id="3EJP"/>
<dbReference type="PDBsum" id="3EJQ"/>
<dbReference type="PDBsum" id="3EJR"/>
<dbReference type="PDBsum" id="3EJS"/>
<dbReference type="PDBsum" id="3EJT"/>
<dbReference type="PDBsum" id="3EJU"/>
<dbReference type="PDBsum" id="6RPC"/>
<dbReference type="PDBsum" id="6RQZ"/>
<dbReference type="PDBsum" id="6RRH"/>
<dbReference type="PDBsum" id="6RRJ"/>
<dbReference type="PDBsum" id="6RRN"/>
<dbReference type="PDBsum" id="6RRU"/>
<dbReference type="PDBsum" id="6RRW"/>
<dbReference type="PDBsum" id="6RRX"/>
<dbReference type="PDBsum" id="6RRY"/>
<dbReference type="PDBsum" id="6RS0"/>
<dbReference type="PDBsum" id="9FTQ"/>
<dbReference type="PDBsum" id="9FTR"/>
<dbReference type="SMR" id="Q24451"/>
<dbReference type="BioGRID" id="66291">
    <property type="interactions" value="3"/>
</dbReference>
<dbReference type="DIP" id="DIP-22953N"/>
<dbReference type="FunCoup" id="Q24451">
    <property type="interactions" value="732"/>
</dbReference>
<dbReference type="IntAct" id="Q24451">
    <property type="interactions" value="5"/>
</dbReference>
<dbReference type="STRING" id="7227.FBpp0306417"/>
<dbReference type="BindingDB" id="Q24451"/>
<dbReference type="CAZy" id="GH38">
    <property type="family name" value="Glycoside Hydrolase Family 38"/>
</dbReference>
<dbReference type="GlyGen" id="Q24451">
    <property type="glycosylation" value="1 site"/>
</dbReference>
<dbReference type="PaxDb" id="7227-FBpp0081509"/>
<dbReference type="DNASU" id="41126"/>
<dbReference type="EnsemblMetazoa" id="FBtr0082031">
    <property type="protein sequence ID" value="FBpp0081509"/>
    <property type="gene ID" value="FBgn0011740"/>
</dbReference>
<dbReference type="GeneID" id="41126"/>
<dbReference type="KEGG" id="dme:Dmel_CG18802"/>
<dbReference type="AGR" id="FB:FBgn0011740"/>
<dbReference type="CTD" id="41126"/>
<dbReference type="FlyBase" id="FBgn0011740">
    <property type="gene designation" value="alpha-Man-IIa"/>
</dbReference>
<dbReference type="VEuPathDB" id="VectorBase:FBgn0011740"/>
<dbReference type="eggNOG" id="KOG1958">
    <property type="taxonomic scope" value="Eukaryota"/>
</dbReference>
<dbReference type="GeneTree" id="ENSGT01030000234638"/>
<dbReference type="HOGENOM" id="CLU_004690_1_0_1"/>
<dbReference type="InParanoid" id="Q24451"/>
<dbReference type="OrthoDB" id="10261055at2759"/>
<dbReference type="PhylomeDB" id="Q24451"/>
<dbReference type="BRENDA" id="3.2.1.114">
    <property type="organism ID" value="1994"/>
</dbReference>
<dbReference type="Reactome" id="R-DME-975578">
    <property type="pathway name" value="Reactions specific to the complex N-glycan synthesis pathway"/>
</dbReference>
<dbReference type="SABIO-RK" id="Q24451"/>
<dbReference type="SignaLink" id="Q24451"/>
<dbReference type="UniPathway" id="UPA00378"/>
<dbReference type="BioGRID-ORCS" id="41126">
    <property type="hits" value="0 hits in 3 CRISPR screens"/>
</dbReference>
<dbReference type="ChiTaRS" id="alpha-Man-IIa">
    <property type="organism name" value="fly"/>
</dbReference>
<dbReference type="EvolutionaryTrace" id="Q24451"/>
<dbReference type="GenomeRNAi" id="41126"/>
<dbReference type="PRO" id="PR:Q24451"/>
<dbReference type="Proteomes" id="UP000000803">
    <property type="component" value="Chromosome 3R"/>
</dbReference>
<dbReference type="Bgee" id="FBgn0011740">
    <property type="expression patterns" value="Expressed in wing disc and 76 other cell types or tissues"/>
</dbReference>
<dbReference type="ExpressionAtlas" id="Q24451">
    <property type="expression patterns" value="baseline and differential"/>
</dbReference>
<dbReference type="GO" id="GO:0005783">
    <property type="term" value="C:endoplasmic reticulum"/>
    <property type="evidence" value="ECO:0000303"/>
    <property type="project" value="FlyBase"/>
</dbReference>
<dbReference type="GO" id="GO:0000139">
    <property type="term" value="C:Golgi membrane"/>
    <property type="evidence" value="ECO:0000314"/>
    <property type="project" value="UniProtKB"/>
</dbReference>
<dbReference type="GO" id="GO:0005795">
    <property type="term" value="C:Golgi stack"/>
    <property type="evidence" value="ECO:0000303"/>
    <property type="project" value="FlyBase"/>
</dbReference>
<dbReference type="GO" id="GO:0004559">
    <property type="term" value="F:alpha-mannosidase activity"/>
    <property type="evidence" value="ECO:0000318"/>
    <property type="project" value="GO_Central"/>
</dbReference>
<dbReference type="GO" id="GO:0030246">
    <property type="term" value="F:carbohydrate binding"/>
    <property type="evidence" value="ECO:0007669"/>
    <property type="project" value="InterPro"/>
</dbReference>
<dbReference type="GO" id="GO:0015923">
    <property type="term" value="F:mannosidase activity"/>
    <property type="evidence" value="ECO:0000314"/>
    <property type="project" value="FlyBase"/>
</dbReference>
<dbReference type="GO" id="GO:0004572">
    <property type="term" value="F:mannosyl-oligosaccharide 1,3-1,6-alpha-mannosidase activity"/>
    <property type="evidence" value="ECO:0000314"/>
    <property type="project" value="UniProtKB"/>
</dbReference>
<dbReference type="GO" id="GO:0046872">
    <property type="term" value="F:metal ion binding"/>
    <property type="evidence" value="ECO:0007669"/>
    <property type="project" value="UniProtKB-KW"/>
</dbReference>
<dbReference type="GO" id="GO:0035010">
    <property type="term" value="P:encapsulation of foreign target"/>
    <property type="evidence" value="ECO:0000315"/>
    <property type="project" value="FlyBase"/>
</dbReference>
<dbReference type="GO" id="GO:0006013">
    <property type="term" value="P:mannose metabolic process"/>
    <property type="evidence" value="ECO:0007669"/>
    <property type="project" value="InterPro"/>
</dbReference>
<dbReference type="GO" id="GO:0006491">
    <property type="term" value="P:N-glycan processing"/>
    <property type="evidence" value="ECO:0000315"/>
    <property type="project" value="FlyBase"/>
</dbReference>
<dbReference type="GO" id="GO:0006486">
    <property type="term" value="P:protein glycosylation"/>
    <property type="evidence" value="ECO:0007669"/>
    <property type="project" value="UniProtKB-UniPathway"/>
</dbReference>
<dbReference type="GO" id="GO:0016063">
    <property type="term" value="P:rhodopsin biosynthetic process"/>
    <property type="evidence" value="ECO:0000315"/>
    <property type="project" value="FlyBase"/>
</dbReference>
<dbReference type="CDD" id="cd10809">
    <property type="entry name" value="GH38N_AMII_GMII_SfManIII_like"/>
    <property type="match status" value="1"/>
</dbReference>
<dbReference type="FunFam" id="1.20.1270.50:FF:000001">
    <property type="entry name" value="Alpha-mannosidase"/>
    <property type="match status" value="1"/>
</dbReference>
<dbReference type="FunFam" id="2.70.98.30:FF:000002">
    <property type="entry name" value="Alpha-mannosidase"/>
    <property type="match status" value="1"/>
</dbReference>
<dbReference type="FunFam" id="3.20.110.10:FF:000003">
    <property type="entry name" value="Alpha-mannosidase"/>
    <property type="match status" value="1"/>
</dbReference>
<dbReference type="FunFam" id="2.60.40.1180:FF:000019">
    <property type="entry name" value="Alpha-mannosidase 2"/>
    <property type="match status" value="1"/>
</dbReference>
<dbReference type="FunFam" id="2.60.40.1360:FF:000006">
    <property type="entry name" value="Alpha-mannosidase 2"/>
    <property type="match status" value="1"/>
</dbReference>
<dbReference type="Gene3D" id="2.60.40.1360">
    <property type="match status" value="1"/>
</dbReference>
<dbReference type="Gene3D" id="3.20.110.10">
    <property type="entry name" value="Glycoside hydrolase 38, N terminal domain"/>
    <property type="match status" value="1"/>
</dbReference>
<dbReference type="Gene3D" id="1.20.1270.50">
    <property type="entry name" value="Glycoside hydrolase family 38, central domain"/>
    <property type="match status" value="1"/>
</dbReference>
<dbReference type="Gene3D" id="2.60.40.1180">
    <property type="entry name" value="Golgi alpha-mannosidase II"/>
    <property type="match status" value="1"/>
</dbReference>
<dbReference type="Gene3D" id="2.70.98.30">
    <property type="entry name" value="Golgi alpha-mannosidase II, domain 4"/>
    <property type="match status" value="1"/>
</dbReference>
<dbReference type="InterPro" id="IPR041566">
    <property type="entry name" value="AManII_C"/>
</dbReference>
<dbReference type="InterPro" id="IPR011013">
    <property type="entry name" value="Gal_mutarotase_sf_dom"/>
</dbReference>
<dbReference type="InterPro" id="IPR011330">
    <property type="entry name" value="Glyco_hydro/deAcase_b/a-brl"/>
</dbReference>
<dbReference type="InterPro" id="IPR011682">
    <property type="entry name" value="Glyco_hydro_38_C"/>
</dbReference>
<dbReference type="InterPro" id="IPR015341">
    <property type="entry name" value="Glyco_hydro_38_cen"/>
</dbReference>
<dbReference type="InterPro" id="IPR037094">
    <property type="entry name" value="Glyco_hydro_38_cen_sf"/>
</dbReference>
<dbReference type="InterPro" id="IPR000602">
    <property type="entry name" value="Glyco_hydro_38_N"/>
</dbReference>
<dbReference type="InterPro" id="IPR027291">
    <property type="entry name" value="Glyco_hydro_38_N_sf"/>
</dbReference>
<dbReference type="InterPro" id="IPR028995">
    <property type="entry name" value="Glyco_hydro_57/38_cen_sf"/>
</dbReference>
<dbReference type="InterPro" id="IPR013780">
    <property type="entry name" value="Glyco_hydro_b"/>
</dbReference>
<dbReference type="InterPro" id="IPR050843">
    <property type="entry name" value="Glycosyl_Hydrlase_38"/>
</dbReference>
<dbReference type="InterPro" id="IPR048534">
    <property type="entry name" value="Man2a1-like_dom"/>
</dbReference>
<dbReference type="PANTHER" id="PTHR11607">
    <property type="entry name" value="ALPHA-MANNOSIDASE"/>
    <property type="match status" value="1"/>
</dbReference>
<dbReference type="PANTHER" id="PTHR11607:SF3">
    <property type="entry name" value="LYSOSOMAL ALPHA-MANNOSIDASE"/>
    <property type="match status" value="1"/>
</dbReference>
<dbReference type="Pfam" id="PF09261">
    <property type="entry name" value="Alpha-mann_mid"/>
    <property type="match status" value="1"/>
</dbReference>
<dbReference type="Pfam" id="PF18230">
    <property type="entry name" value="Glyc_hyd_38C_2"/>
    <property type="match status" value="1"/>
</dbReference>
<dbReference type="Pfam" id="PF07748">
    <property type="entry name" value="Glyco_hydro_38C"/>
    <property type="match status" value="1"/>
</dbReference>
<dbReference type="Pfam" id="PF01074">
    <property type="entry name" value="Glyco_hydro_38N"/>
    <property type="match status" value="1"/>
</dbReference>
<dbReference type="Pfam" id="PF21260">
    <property type="entry name" value="Laman-like_dom"/>
    <property type="match status" value="1"/>
</dbReference>
<dbReference type="SMART" id="SM00872">
    <property type="entry name" value="Alpha-mann_mid"/>
    <property type="match status" value="1"/>
</dbReference>
<dbReference type="SUPFAM" id="SSF88688">
    <property type="entry name" value="Families 57/38 glycoside transferase middle domain"/>
    <property type="match status" value="1"/>
</dbReference>
<dbReference type="SUPFAM" id="SSF74650">
    <property type="entry name" value="Galactose mutarotase-like"/>
    <property type="match status" value="1"/>
</dbReference>
<dbReference type="SUPFAM" id="SSF88713">
    <property type="entry name" value="Glycoside hydrolase/deacetylase"/>
    <property type="match status" value="1"/>
</dbReference>
<reference key="1">
    <citation type="journal article" date="1995" name="Gene">
        <title>Cloning and sequence analysis of GmII, a Drosophila melanogaster homologue of the cDNA encoding murine Golgi alpha-mannosidase II.</title>
        <authorList>
            <person name="Foster J.M."/>
            <person name="Yudkin B."/>
            <person name="Lockyer A.E."/>
            <person name="Roberts D.B."/>
        </authorList>
    </citation>
    <scope>NUCLEOTIDE SEQUENCE [MRNA]</scope>
</reference>
<reference key="2">
    <citation type="journal article" date="1999" name="J. Cell Sci.">
        <title>The Drosophila GMII gene encodes a Golgi alpha-mannosidase II.</title>
        <authorList>
            <person name="Rabouille C."/>
            <person name="Kuntz D.A."/>
            <person name="Lockyer A.E."/>
            <person name="Watson R."/>
            <person name="Signorelli T."/>
            <person name="Rose D.R."/>
            <person name="van den Heuvel M."/>
            <person name="Roberts D.B."/>
        </authorList>
    </citation>
    <scope>NUCLEOTIDE SEQUENCE [GENOMIC DNA]</scope>
    <scope>CATALYTIC ACTIVITY</scope>
    <scope>SUBCELLULAR LOCATION</scope>
    <scope>INDUCTION</scope>
</reference>
<reference key="3">
    <citation type="journal article" date="2000" name="Science">
        <title>The genome sequence of Drosophila melanogaster.</title>
        <authorList>
            <person name="Adams M.D."/>
            <person name="Celniker S.E."/>
            <person name="Holt R.A."/>
            <person name="Evans C.A."/>
            <person name="Gocayne J.D."/>
            <person name="Amanatides P.G."/>
            <person name="Scherer S.E."/>
            <person name="Li P.W."/>
            <person name="Hoskins R.A."/>
            <person name="Galle R.F."/>
            <person name="George R.A."/>
            <person name="Lewis S.E."/>
            <person name="Richards S."/>
            <person name="Ashburner M."/>
            <person name="Henderson S.N."/>
            <person name="Sutton G.G."/>
            <person name="Wortman J.R."/>
            <person name="Yandell M.D."/>
            <person name="Zhang Q."/>
            <person name="Chen L.X."/>
            <person name="Brandon R.C."/>
            <person name="Rogers Y.-H.C."/>
            <person name="Blazej R.G."/>
            <person name="Champe M."/>
            <person name="Pfeiffer B.D."/>
            <person name="Wan K.H."/>
            <person name="Doyle C."/>
            <person name="Baxter E.G."/>
            <person name="Helt G."/>
            <person name="Nelson C.R."/>
            <person name="Miklos G.L.G."/>
            <person name="Abril J.F."/>
            <person name="Agbayani A."/>
            <person name="An H.-J."/>
            <person name="Andrews-Pfannkoch C."/>
            <person name="Baldwin D."/>
            <person name="Ballew R.M."/>
            <person name="Basu A."/>
            <person name="Baxendale J."/>
            <person name="Bayraktaroglu L."/>
            <person name="Beasley E.M."/>
            <person name="Beeson K.Y."/>
            <person name="Benos P.V."/>
            <person name="Berman B.P."/>
            <person name="Bhandari D."/>
            <person name="Bolshakov S."/>
            <person name="Borkova D."/>
            <person name="Botchan M.R."/>
            <person name="Bouck J."/>
            <person name="Brokstein P."/>
            <person name="Brottier P."/>
            <person name="Burtis K.C."/>
            <person name="Busam D.A."/>
            <person name="Butler H."/>
            <person name="Cadieu E."/>
            <person name="Center A."/>
            <person name="Chandra I."/>
            <person name="Cherry J.M."/>
            <person name="Cawley S."/>
            <person name="Dahlke C."/>
            <person name="Davenport L.B."/>
            <person name="Davies P."/>
            <person name="de Pablos B."/>
            <person name="Delcher A."/>
            <person name="Deng Z."/>
            <person name="Mays A.D."/>
            <person name="Dew I."/>
            <person name="Dietz S.M."/>
            <person name="Dodson K."/>
            <person name="Doup L.E."/>
            <person name="Downes M."/>
            <person name="Dugan-Rocha S."/>
            <person name="Dunkov B.C."/>
            <person name="Dunn P."/>
            <person name="Durbin K.J."/>
            <person name="Evangelista C.C."/>
            <person name="Ferraz C."/>
            <person name="Ferriera S."/>
            <person name="Fleischmann W."/>
            <person name="Fosler C."/>
            <person name="Gabrielian A.E."/>
            <person name="Garg N.S."/>
            <person name="Gelbart W.M."/>
            <person name="Glasser K."/>
            <person name="Glodek A."/>
            <person name="Gong F."/>
            <person name="Gorrell J.H."/>
            <person name="Gu Z."/>
            <person name="Guan P."/>
            <person name="Harris M."/>
            <person name="Harris N.L."/>
            <person name="Harvey D.A."/>
            <person name="Heiman T.J."/>
            <person name="Hernandez J.R."/>
            <person name="Houck J."/>
            <person name="Hostin D."/>
            <person name="Houston K.A."/>
            <person name="Howland T.J."/>
            <person name="Wei M.-H."/>
            <person name="Ibegwam C."/>
            <person name="Jalali M."/>
            <person name="Kalush F."/>
            <person name="Karpen G.H."/>
            <person name="Ke Z."/>
            <person name="Kennison J.A."/>
            <person name="Ketchum K.A."/>
            <person name="Kimmel B.E."/>
            <person name="Kodira C.D."/>
            <person name="Kraft C.L."/>
            <person name="Kravitz S."/>
            <person name="Kulp D."/>
            <person name="Lai Z."/>
            <person name="Lasko P."/>
            <person name="Lei Y."/>
            <person name="Levitsky A.A."/>
            <person name="Li J.H."/>
            <person name="Li Z."/>
            <person name="Liang Y."/>
            <person name="Lin X."/>
            <person name="Liu X."/>
            <person name="Mattei B."/>
            <person name="McIntosh T.C."/>
            <person name="McLeod M.P."/>
            <person name="McPherson D."/>
            <person name="Merkulov G."/>
            <person name="Milshina N.V."/>
            <person name="Mobarry C."/>
            <person name="Morris J."/>
            <person name="Moshrefi A."/>
            <person name="Mount S.M."/>
            <person name="Moy M."/>
            <person name="Murphy B."/>
            <person name="Murphy L."/>
            <person name="Muzny D.M."/>
            <person name="Nelson D.L."/>
            <person name="Nelson D.R."/>
            <person name="Nelson K.A."/>
            <person name="Nixon K."/>
            <person name="Nusskern D.R."/>
            <person name="Pacleb J.M."/>
            <person name="Palazzolo M."/>
            <person name="Pittman G.S."/>
            <person name="Pan S."/>
            <person name="Pollard J."/>
            <person name="Puri V."/>
            <person name="Reese M.G."/>
            <person name="Reinert K."/>
            <person name="Remington K."/>
            <person name="Saunders R.D.C."/>
            <person name="Scheeler F."/>
            <person name="Shen H."/>
            <person name="Shue B.C."/>
            <person name="Siden-Kiamos I."/>
            <person name="Simpson M."/>
            <person name="Skupski M.P."/>
            <person name="Smith T.J."/>
            <person name="Spier E."/>
            <person name="Spradling A.C."/>
            <person name="Stapleton M."/>
            <person name="Strong R."/>
            <person name="Sun E."/>
            <person name="Svirskas R."/>
            <person name="Tector C."/>
            <person name="Turner R."/>
            <person name="Venter E."/>
            <person name="Wang A.H."/>
            <person name="Wang X."/>
            <person name="Wang Z.-Y."/>
            <person name="Wassarman D.A."/>
            <person name="Weinstock G.M."/>
            <person name="Weissenbach J."/>
            <person name="Williams S.M."/>
            <person name="Woodage T."/>
            <person name="Worley K.C."/>
            <person name="Wu D."/>
            <person name="Yang S."/>
            <person name="Yao Q.A."/>
            <person name="Ye J."/>
            <person name="Yeh R.-F."/>
            <person name="Zaveri J.S."/>
            <person name="Zhan M."/>
            <person name="Zhang G."/>
            <person name="Zhao Q."/>
            <person name="Zheng L."/>
            <person name="Zheng X.H."/>
            <person name="Zhong F.N."/>
            <person name="Zhong W."/>
            <person name="Zhou X."/>
            <person name="Zhu S.C."/>
            <person name="Zhu X."/>
            <person name="Smith H.O."/>
            <person name="Gibbs R.A."/>
            <person name="Myers E.W."/>
            <person name="Rubin G.M."/>
            <person name="Venter J.C."/>
        </authorList>
    </citation>
    <scope>NUCLEOTIDE SEQUENCE [LARGE SCALE GENOMIC DNA]</scope>
    <source>
        <strain>Berkeley</strain>
    </source>
</reference>
<reference key="4">
    <citation type="journal article" date="2002" name="Genome Biol.">
        <title>Annotation of the Drosophila melanogaster euchromatic genome: a systematic review.</title>
        <authorList>
            <person name="Misra S."/>
            <person name="Crosby M.A."/>
            <person name="Mungall C.J."/>
            <person name="Matthews B.B."/>
            <person name="Campbell K.S."/>
            <person name="Hradecky P."/>
            <person name="Huang Y."/>
            <person name="Kaminker J.S."/>
            <person name="Millburn G.H."/>
            <person name="Prochnik S.E."/>
            <person name="Smith C.D."/>
            <person name="Tupy J.L."/>
            <person name="Whitfield E.J."/>
            <person name="Bayraktaroglu L."/>
            <person name="Berman B.P."/>
            <person name="Bettencourt B.R."/>
            <person name="Celniker S.E."/>
            <person name="de Grey A.D.N.J."/>
            <person name="Drysdale R.A."/>
            <person name="Harris N.L."/>
            <person name="Richter J."/>
            <person name="Russo S."/>
            <person name="Schroeder A.J."/>
            <person name="Shu S.Q."/>
            <person name="Stapleton M."/>
            <person name="Yamada C."/>
            <person name="Ashburner M."/>
            <person name="Gelbart W.M."/>
            <person name="Rubin G.M."/>
            <person name="Lewis S.E."/>
        </authorList>
    </citation>
    <scope>GENOME REANNOTATION</scope>
    <source>
        <strain>Berkeley</strain>
    </source>
</reference>
<reference key="5">
    <citation type="journal article" date="2002" name="Genome Biol.">
        <title>A Drosophila full-length cDNA resource.</title>
        <authorList>
            <person name="Stapleton M."/>
            <person name="Carlson J.W."/>
            <person name="Brokstein P."/>
            <person name="Yu C."/>
            <person name="Champe M."/>
            <person name="George R.A."/>
            <person name="Guarin H."/>
            <person name="Kronmiller B."/>
            <person name="Pacleb J.M."/>
            <person name="Park S."/>
            <person name="Wan K.H."/>
            <person name="Rubin G.M."/>
            <person name="Celniker S.E."/>
        </authorList>
    </citation>
    <scope>NUCLEOTIDE SEQUENCE [LARGE SCALE MRNA]</scope>
    <source>
        <strain>Berkeley</strain>
        <tissue>Head</tissue>
    </source>
</reference>
<keyword id="KW-0002">3D-structure</keyword>
<keyword id="KW-1015">Disulfide bond</keyword>
<keyword id="KW-0326">Glycosidase</keyword>
<keyword id="KW-0333">Golgi apparatus</keyword>
<keyword id="KW-0378">Hydrolase</keyword>
<keyword id="KW-0472">Membrane</keyword>
<keyword id="KW-0479">Metal-binding</keyword>
<keyword id="KW-1185">Reference proteome</keyword>
<keyword id="KW-0735">Signal-anchor</keyword>
<keyword id="KW-0812">Transmembrane</keyword>
<keyword id="KW-1133">Transmembrane helix</keyword>
<keyword id="KW-0862">Zinc</keyword>
<evidence type="ECO:0000250" key="1"/>
<evidence type="ECO:0000255" key="2"/>
<evidence type="ECO:0000256" key="3">
    <source>
        <dbReference type="SAM" id="MobiDB-lite"/>
    </source>
</evidence>
<evidence type="ECO:0000269" key="4">
    <source>
    </source>
</evidence>
<evidence type="ECO:0000303" key="5">
    <source>
    </source>
</evidence>
<evidence type="ECO:0000305" key="6"/>
<evidence type="ECO:0000312" key="7">
    <source>
        <dbReference type="FlyBase" id="FBgn0011740"/>
    </source>
</evidence>
<evidence type="ECO:0007829" key="8">
    <source>
        <dbReference type="PDB" id="1QWN"/>
    </source>
</evidence>
<evidence type="ECO:0007829" key="9">
    <source>
        <dbReference type="PDB" id="3BVX"/>
    </source>
</evidence>
<evidence type="ECO:0007829" key="10">
    <source>
        <dbReference type="PDB" id="6RRH"/>
    </source>
</evidence>
<evidence type="ECO:0007829" key="11">
    <source>
        <dbReference type="PDB" id="6RRN"/>
    </source>
</evidence>
<evidence type="ECO:0007829" key="12">
    <source>
        <dbReference type="PDB" id="6RRY"/>
    </source>
</evidence>
<accession>Q24451</accession>
<accession>Q9TYG5</accession>
<accession>Q9VHD8</accession>
<accession>Q9VHD9</accession>
<feature type="chain" id="PRO_0000206906" description="Alpha-mannosidase 2">
    <location>
        <begin position="1"/>
        <end position="1108"/>
    </location>
</feature>
<feature type="topological domain" description="Cytoplasmic" evidence="2">
    <location>
        <begin position="1"/>
        <end position="9"/>
    </location>
</feature>
<feature type="transmembrane region" description="Helical; Signal-anchor for type II membrane protein" evidence="2">
    <location>
        <begin position="10"/>
        <end position="30"/>
    </location>
</feature>
<feature type="topological domain" description="Lumenal" evidence="2">
    <location>
        <begin position="31"/>
        <end position="1108"/>
    </location>
</feature>
<feature type="region of interest" description="Disordered" evidence="3">
    <location>
        <begin position="70"/>
        <end position="92"/>
    </location>
</feature>
<feature type="active site" description="Nucleophile" evidence="1">
    <location>
        <position position="267"/>
    </location>
</feature>
<feature type="binding site" evidence="1">
    <location>
        <position position="153"/>
    </location>
    <ligand>
        <name>Zn(2+)</name>
        <dbReference type="ChEBI" id="CHEBI:29105"/>
    </ligand>
</feature>
<feature type="binding site" evidence="1">
    <location>
        <position position="155"/>
    </location>
    <ligand>
        <name>Zn(2+)</name>
        <dbReference type="ChEBI" id="CHEBI:29105"/>
    </ligand>
</feature>
<feature type="binding site" evidence="1">
    <location>
        <position position="267"/>
    </location>
    <ligand>
        <name>Zn(2+)</name>
        <dbReference type="ChEBI" id="CHEBI:29105"/>
    </ligand>
</feature>
<feature type="binding site" evidence="1">
    <location>
        <position position="534"/>
    </location>
    <ligand>
        <name>Zn(2+)</name>
        <dbReference type="ChEBI" id="CHEBI:29105"/>
    </ligand>
</feature>
<feature type="sequence conflict" description="In Ref. 1; CAA54732." evidence="6" ref="1">
    <original>E</original>
    <variation>K</variation>
    <location>
        <position position="71"/>
    </location>
</feature>
<feature type="sequence conflict" description="In Ref. 2; CAA10755." evidence="6" ref="2">
    <original>QL</original>
    <variation>HV</variation>
    <location>
        <begin position="305"/>
        <end position="306"/>
    </location>
</feature>
<feature type="sequence conflict" description="In Ref. 2; CAA10755." evidence="6" ref="2">
    <original>L</original>
    <variation>V</variation>
    <location>
        <position position="397"/>
    </location>
</feature>
<feature type="sequence conflict" description="In Ref. 1; CAA54732." evidence="6" ref="1">
    <original>E</original>
    <variation>K</variation>
    <location>
        <position position="970"/>
    </location>
</feature>
<feature type="strand" evidence="9">
    <location>
        <begin position="97"/>
        <end position="99"/>
    </location>
</feature>
<feature type="strand" evidence="9">
    <location>
        <begin position="105"/>
        <end position="107"/>
    </location>
</feature>
<feature type="helix" evidence="9">
    <location>
        <begin position="108"/>
        <end position="114"/>
    </location>
</feature>
<feature type="strand" evidence="9">
    <location>
        <begin position="123"/>
        <end position="125"/>
    </location>
</feature>
<feature type="helix" evidence="9">
    <location>
        <begin position="135"/>
        <end position="137"/>
    </location>
</feature>
<feature type="strand" evidence="12">
    <location>
        <begin position="140"/>
        <end position="142"/>
    </location>
</feature>
<feature type="strand" evidence="9">
    <location>
        <begin position="144"/>
        <end position="153"/>
    </location>
</feature>
<feature type="strand" evidence="9">
    <location>
        <begin position="156"/>
        <end position="160"/>
    </location>
</feature>
<feature type="helix" evidence="9">
    <location>
        <begin position="162"/>
        <end position="168"/>
    </location>
</feature>
<feature type="helix" evidence="9">
    <location>
        <begin position="170"/>
        <end position="183"/>
    </location>
</feature>
<feature type="strand" evidence="9">
    <location>
        <begin position="189"/>
        <end position="191"/>
    </location>
</feature>
<feature type="helix" evidence="9">
    <location>
        <begin position="194"/>
        <end position="203"/>
    </location>
</feature>
<feature type="helix" evidence="9">
    <location>
        <begin position="206"/>
        <end position="217"/>
    </location>
</feature>
<feature type="strand" evidence="9">
    <location>
        <begin position="220"/>
        <end position="225"/>
    </location>
</feature>
<feature type="strand" evidence="9">
    <location>
        <begin position="233"/>
        <end position="235"/>
    </location>
</feature>
<feature type="helix" evidence="9">
    <location>
        <begin position="238"/>
        <end position="256"/>
    </location>
</feature>
<feature type="strand" evidence="9">
    <location>
        <begin position="262"/>
        <end position="265"/>
    </location>
</feature>
<feature type="strand" evidence="9">
    <location>
        <begin position="268"/>
        <end position="271"/>
    </location>
</feature>
<feature type="helix" evidence="9">
    <location>
        <begin position="274"/>
        <end position="280"/>
    </location>
</feature>
<feature type="turn" evidence="9">
    <location>
        <begin position="281"/>
        <end position="283"/>
    </location>
</feature>
<feature type="strand" evidence="9">
    <location>
        <begin position="286"/>
        <end position="289"/>
    </location>
</feature>
<feature type="helix" evidence="9">
    <location>
        <begin position="294"/>
        <end position="302"/>
    </location>
</feature>
<feature type="strand" evidence="9">
    <location>
        <begin position="306"/>
        <end position="310"/>
    </location>
</feature>
<feature type="strand" evidence="9">
    <location>
        <begin position="322"/>
        <end position="326"/>
    </location>
</feature>
<feature type="helix" evidence="9">
    <location>
        <begin position="334"/>
        <end position="336"/>
    </location>
</feature>
<feature type="strand" evidence="9">
    <location>
        <begin position="338"/>
        <end position="340"/>
    </location>
</feature>
<feature type="helix" evidence="9">
    <location>
        <begin position="342"/>
        <end position="345"/>
    </location>
</feature>
<feature type="helix" evidence="9">
    <location>
        <begin position="346"/>
        <end position="348"/>
    </location>
</feature>
<feature type="helix" evidence="9">
    <location>
        <begin position="350"/>
        <end position="352"/>
    </location>
</feature>
<feature type="helix" evidence="11">
    <location>
        <begin position="354"/>
        <end position="356"/>
    </location>
</feature>
<feature type="turn" evidence="9">
    <location>
        <begin position="371"/>
        <end position="373"/>
    </location>
</feature>
<feature type="helix" evidence="9">
    <location>
        <begin position="374"/>
        <end position="389"/>
    </location>
</feature>
<feature type="strand" evidence="9">
    <location>
        <begin position="392"/>
        <end position="404"/>
    </location>
</feature>
<feature type="helix" evidence="9">
    <location>
        <begin position="410"/>
        <end position="429"/>
    </location>
</feature>
<feature type="helix" evidence="9">
    <location>
        <begin position="431"/>
        <end position="433"/>
    </location>
</feature>
<feature type="strand" evidence="9">
    <location>
        <begin position="435"/>
        <end position="439"/>
    </location>
</feature>
<feature type="helix" evidence="9">
    <location>
        <begin position="442"/>
        <end position="454"/>
    </location>
</feature>
<feature type="strand" evidence="9">
    <location>
        <begin position="462"/>
        <end position="465"/>
    </location>
</feature>
<feature type="strand" evidence="9">
    <location>
        <begin position="471"/>
        <end position="473"/>
    </location>
</feature>
<feature type="helix" evidence="9">
    <location>
        <begin position="480"/>
        <end position="482"/>
    </location>
</feature>
<feature type="helix" evidence="9">
    <location>
        <begin position="486"/>
        <end position="507"/>
    </location>
</feature>
<feature type="helix" evidence="9">
    <location>
        <begin position="513"/>
        <end position="515"/>
    </location>
</feature>
<feature type="helix" evidence="9">
    <location>
        <begin position="517"/>
        <end position="531"/>
    </location>
</feature>
<feature type="turn" evidence="9">
    <location>
        <begin position="534"/>
        <end position="538"/>
    </location>
</feature>
<feature type="helix" evidence="9">
    <location>
        <begin position="543"/>
        <end position="571"/>
    </location>
</feature>
<feature type="turn" evidence="9">
    <location>
        <begin position="575"/>
        <end position="577"/>
    </location>
</feature>
<feature type="strand" evidence="9">
    <location>
        <begin position="586"/>
        <end position="590"/>
    </location>
</feature>
<feature type="strand" evidence="9">
    <location>
        <begin position="592"/>
        <end position="595"/>
    </location>
</feature>
<feature type="turn" evidence="9">
    <location>
        <begin position="597"/>
        <end position="599"/>
    </location>
</feature>
<feature type="turn" evidence="9">
    <location>
        <begin position="610"/>
        <end position="612"/>
    </location>
</feature>
<feature type="strand" evidence="9">
    <location>
        <begin position="613"/>
        <end position="622"/>
    </location>
</feature>
<feature type="strand" evidence="9">
    <location>
        <begin position="624"/>
        <end position="626"/>
    </location>
</feature>
<feature type="strand" evidence="9">
    <location>
        <begin position="628"/>
        <end position="637"/>
    </location>
</feature>
<feature type="strand" evidence="9">
    <location>
        <begin position="641"/>
        <end position="645"/>
    </location>
</feature>
<feature type="strand" evidence="9">
    <location>
        <begin position="653"/>
        <end position="664"/>
    </location>
</feature>
<feature type="turn" evidence="9">
    <location>
        <begin position="665"/>
        <end position="668"/>
    </location>
</feature>
<feature type="strand" evidence="9">
    <location>
        <begin position="669"/>
        <end position="687"/>
    </location>
</feature>
<feature type="strand" evidence="9">
    <location>
        <begin position="691"/>
        <end position="699"/>
    </location>
</feature>
<feature type="strand" evidence="10">
    <location>
        <begin position="701"/>
        <end position="703"/>
    </location>
</feature>
<feature type="strand" evidence="9">
    <location>
        <begin position="707"/>
        <end position="709"/>
    </location>
</feature>
<feature type="strand" evidence="9">
    <location>
        <begin position="711"/>
        <end position="715"/>
    </location>
</feature>
<feature type="strand" evidence="9">
    <location>
        <begin position="732"/>
        <end position="734"/>
    </location>
</feature>
<feature type="strand" evidence="9">
    <location>
        <begin position="739"/>
        <end position="742"/>
    </location>
</feature>
<feature type="strand" evidence="9">
    <location>
        <begin position="748"/>
        <end position="751"/>
    </location>
</feature>
<feature type="strand" evidence="9">
    <location>
        <begin position="757"/>
        <end position="761"/>
    </location>
</feature>
<feature type="strand" evidence="8">
    <location>
        <begin position="763"/>
        <end position="766"/>
    </location>
</feature>
<feature type="strand" evidence="9">
    <location>
        <begin position="769"/>
        <end position="778"/>
    </location>
</feature>
<feature type="strand" evidence="9">
    <location>
        <begin position="782"/>
        <end position="784"/>
    </location>
</feature>
<feature type="strand" evidence="9">
    <location>
        <begin position="794"/>
        <end position="797"/>
    </location>
</feature>
<feature type="strand" evidence="9">
    <location>
        <begin position="808"/>
        <end position="812"/>
    </location>
</feature>
<feature type="strand" evidence="9">
    <location>
        <begin position="817"/>
        <end position="823"/>
    </location>
</feature>
<feature type="strand" evidence="9">
    <location>
        <begin position="826"/>
        <end position="836"/>
    </location>
</feature>
<feature type="strand" evidence="9">
    <location>
        <begin position="838"/>
        <end position="843"/>
    </location>
</feature>
<feature type="strand" evidence="9">
    <location>
        <begin position="851"/>
        <end position="859"/>
    </location>
</feature>
<feature type="strand" evidence="9">
    <location>
        <begin position="866"/>
        <end position="871"/>
    </location>
</feature>
<feature type="turn" evidence="9">
    <location>
        <begin position="872"/>
        <end position="874"/>
    </location>
</feature>
<feature type="strand" evidence="9">
    <location>
        <begin position="875"/>
        <end position="880"/>
    </location>
</feature>
<feature type="helix" evidence="9">
    <location>
        <begin position="887"/>
        <end position="890"/>
    </location>
</feature>
<feature type="strand" evidence="9">
    <location>
        <begin position="892"/>
        <end position="901"/>
    </location>
</feature>
<feature type="strand" evidence="9">
    <location>
        <begin position="903"/>
        <end position="913"/>
    </location>
</feature>
<feature type="strand" evidence="9">
    <location>
        <begin position="915"/>
        <end position="918"/>
    </location>
</feature>
<feature type="strand" evidence="9">
    <location>
        <begin position="924"/>
        <end position="933"/>
    </location>
</feature>
<feature type="strand" evidence="9">
    <location>
        <begin position="938"/>
        <end position="940"/>
    </location>
</feature>
<feature type="strand" evidence="9">
    <location>
        <begin position="951"/>
        <end position="961"/>
    </location>
</feature>
<feature type="strand" evidence="9">
    <location>
        <begin position="973"/>
        <end position="975"/>
    </location>
</feature>
<feature type="helix" evidence="9">
    <location>
        <begin position="979"/>
        <end position="989"/>
    </location>
</feature>
<feature type="strand" evidence="9">
    <location>
        <begin position="993"/>
        <end position="997"/>
    </location>
</feature>
<feature type="strand" evidence="9">
    <location>
        <begin position="1007"/>
        <end position="1009"/>
    </location>
</feature>
<feature type="strand" evidence="9">
    <location>
        <begin position="1020"/>
        <end position="1027"/>
    </location>
</feature>
<feature type="strand" evidence="9">
    <location>
        <begin position="1034"/>
        <end position="1044"/>
    </location>
</feature>
<feature type="helix" evidence="9">
    <location>
        <begin position="1062"/>
        <end position="1064"/>
    </location>
</feature>
<feature type="strand" evidence="9">
    <location>
        <begin position="1065"/>
        <end position="1075"/>
    </location>
</feature>
<feature type="strand" evidence="9">
    <location>
        <begin position="1081"/>
        <end position="1085"/>
    </location>
</feature>
<feature type="helix" evidence="9">
    <location>
        <begin position="1087"/>
        <end position="1089"/>
    </location>
</feature>
<feature type="strand" evidence="9">
    <location>
        <begin position="1099"/>
        <end position="1107"/>
    </location>
</feature>
<organism>
    <name type="scientific">Drosophila melanogaster</name>
    <name type="common">Fruit fly</name>
    <dbReference type="NCBI Taxonomy" id="7227"/>
    <lineage>
        <taxon>Eukaryota</taxon>
        <taxon>Metazoa</taxon>
        <taxon>Ecdysozoa</taxon>
        <taxon>Arthropoda</taxon>
        <taxon>Hexapoda</taxon>
        <taxon>Insecta</taxon>
        <taxon>Pterygota</taxon>
        <taxon>Neoptera</taxon>
        <taxon>Endopterygota</taxon>
        <taxon>Diptera</taxon>
        <taxon>Brachycera</taxon>
        <taxon>Muscomorpha</taxon>
        <taxon>Ephydroidea</taxon>
        <taxon>Drosophilidae</taxon>
        <taxon>Drosophila</taxon>
        <taxon>Sophophora</taxon>
    </lineage>
</organism>
<protein>
    <recommendedName>
        <fullName>Alpha-mannosidase 2</fullName>
        <ecNumber evidence="4">3.2.1.114</ecNumber>
    </recommendedName>
    <alternativeName>
        <fullName evidence="5">Golgi alpha-mannosidase II</fullName>
        <shortName>AMan II</shortName>
        <shortName>Man II</shortName>
    </alternativeName>
    <alternativeName>
        <fullName evidence="7">Golgi alpha-mannosidase IIa</fullName>
    </alternativeName>
    <alternativeName>
        <fullName>Mannosyl-oligosaccharide 1,3-1,6-alpha-mannosidase</fullName>
    </alternativeName>
</protein>
<proteinExistence type="evidence at protein level"/>
<sequence length="1108" mass="126721">MLRIRRRFALVICSGCLLVFLSLYIILNFAAPAATQIKPNYENIENKLHELENGLQEHGEEMRNLRARLAETSNRDDPIRPPLKVARSPRPGQCQDVVQDVPNVDVQMLELYDRMSFKDIDGGVWKQGWNIKYDPLKYNAHHKLKVFVVPHSHNDPGWIQTFEEYYQHDTKHILSNALRHLHDNPEMKFIWAEISYFARFYHDLGENKKLQMKSIVKNGQLEFVTGGWVMPDEANSHWRNVLLQLTEGQTWLKQFMNVTPTASWAIDPFGHSPTMPYILQKSGFKNMLIQRTHYSVKKELAQQRQLEFLWRQIWDNKGDTALFTHMMPFYSYDIPHTCGPDPKVCCQFDFKRMGSFGLSCPWKVPPRTISDQNVAARSDLLVDQWKKKAELYRTNVLLIPLGDDFRFKQNTEWDVQRVNYERLFEHINSQAHFNVQAQFGTLQEYFDAVHQAERAGQAEFPTLSGDFFTYADRSDNYWSGYYTSRPYHKRMDRVLMHYVRAAEMLSAWHSWDGMARIEERLEQARRELSLFQHHDGITGTAKTHVVVDYEQRMQEALKACQMVMQQSVYRLLTKPSIYSPDFSFSYFTLDDSRWPGSGVEDSRTTIILGEDILPSKHVVMHNTLPHWREQLVDFYVSSPFVSVTDLANNPVEAQVSPVWSWHHDTLTKTIHPQGSTTKYRIIFKARVPPMGLATYVLTISDSKPEHTSYASNLLLRKNPTSLPLGQYPEDVKFGDPREISLRVGNGPTLAFSEQGLLKSIQLTQDSPHVPVHFKFLKYGVRSHGDRSGAYLFLPNGPASPVELGQPVVLVTKGKLESSVSVGLPSVVHQTIMRGGAPEIRNLVDIGSLDNTEIVMRLETHIDSGDIFYTDLNGLQFIKRRRLDKLPLQANYYPIPSGMFIEDANTRLTLLTGQPLGGSSLASGELEIMQDRRLASDDERGLGQGVLDNKPVLHIYRLVLEKVNNCVRPSELHPAGYLTSAAHKASQSLLDPLDKFIFAENEWIGAQGQFGGDHPSAREDLDVSVMRRLTKSSAKTQRVGYVLHRTNLMQCGTPEEHTQKLDVCHLLPNVARCERTTLTFLQNLEHLDGMVAPEVCPMETAAYVSSHSS</sequence>
<comment type="function">
    <text evidence="1">Catalyzes the first committed step in the biosynthesis of complex N-glycans. It controls conversion of high mannose to complex N-glycans; the final hydrolytic step in the N-glycan maturation pathway (By similarity).</text>
</comment>
<comment type="catalytic activity">
    <reaction evidence="4">
        <text>N(4)-{beta-D-GlcNAc-(1-&gt;2)-alpha-D-Man-(1-&gt;3)-[alpha-D-Man-(1-&gt;3)-[alpha-D-Man-(1-&gt;6)]-alpha-D-Man-(1-&gt;6)]-beta-D-Man-(1-&gt;4)-beta-D-GlcNAc-(1-&gt;4)-beta-D-GlcNAc}-L-asparaginyl-[protein] + 2 H2O = 2 alpha-D-mannopyranose + an N(4)-{beta-D-GlcNAc-(1-&gt;2)-alpha-D-Man-(1-&gt;3)-[alpha-D-Man-(1-&gt;6)]-beta-D-Man-(1-&gt;4)-beta-D-GlcNAc-(1-&gt;4)-beta-D-GlcNAc}-L-asparaginyl-[protein]</text>
        <dbReference type="Rhea" id="RHEA:56052"/>
        <dbReference type="Rhea" id="RHEA-COMP:14368"/>
        <dbReference type="Rhea" id="RHEA-COMP:14369"/>
        <dbReference type="ChEBI" id="CHEBI:15377"/>
        <dbReference type="ChEBI" id="CHEBI:28729"/>
        <dbReference type="ChEBI" id="CHEBI:60615"/>
        <dbReference type="ChEBI" id="CHEBI:60625"/>
        <dbReference type="EC" id="3.2.1.114"/>
    </reaction>
</comment>
<comment type="cofactor">
    <cofactor evidence="1">
        <name>Zn(2+)</name>
        <dbReference type="ChEBI" id="CHEBI:29105"/>
    </cofactor>
    <text evidence="1">Binds 1 zinc ion per subunit.</text>
</comment>
<comment type="pathway">
    <text>Protein modification; protein glycosylation.</text>
</comment>
<comment type="subunit">
    <text evidence="1">Homodimer; disulfide-linked.</text>
</comment>
<comment type="subcellular location">
    <subcellularLocation>
        <location evidence="4">Golgi apparatus membrane</location>
        <topology evidence="4">Single-pass type II membrane protein</topology>
    </subcellularLocation>
</comment>
<comment type="induction">
    <text evidence="4">Inhibited by swainsonine and by copper sulfate.</text>
</comment>
<comment type="similarity">
    <text evidence="6">Belongs to the glycosyl hydrolase 38 family.</text>
</comment>
<name>MAN2_DROME</name>